<reference key="1">
    <citation type="submission" date="2004-11" db="EMBL/GenBank/DDBJ databases">
        <authorList>
            <consortium name="The German cDNA consortium"/>
        </authorList>
    </citation>
    <scope>NUCLEOTIDE SEQUENCE [LARGE SCALE MRNA]</scope>
    <source>
        <tissue>Kidney</tissue>
    </source>
</reference>
<protein>
    <recommendedName>
        <fullName>Gamma-secretase subunit APH-1B</fullName>
        <shortName>APH-1b</shortName>
    </recommendedName>
    <alternativeName>
        <fullName>Aph-1beta</fullName>
    </alternativeName>
</protein>
<dbReference type="EMBL" id="CR857881">
    <property type="protein sequence ID" value="CAH90134.1"/>
    <property type="molecule type" value="mRNA"/>
</dbReference>
<dbReference type="RefSeq" id="NP_001125030.1">
    <property type="nucleotide sequence ID" value="NM_001131558.1"/>
</dbReference>
<dbReference type="SMR" id="Q5RDM3"/>
<dbReference type="FunCoup" id="Q5RDM3">
    <property type="interactions" value="871"/>
</dbReference>
<dbReference type="STRING" id="9601.ENSPPYP00000007417"/>
<dbReference type="Ensembl" id="ENSPPYT00000007721.3">
    <property type="protein sequence ID" value="ENSPPYP00000007417.2"/>
    <property type="gene ID" value="ENSPPYG00000006539.3"/>
</dbReference>
<dbReference type="GeneID" id="100171910"/>
<dbReference type="KEGG" id="pon:100171910"/>
<dbReference type="CTD" id="83464"/>
<dbReference type="eggNOG" id="KOG3972">
    <property type="taxonomic scope" value="Eukaryota"/>
</dbReference>
<dbReference type="GeneTree" id="ENSGT00390000002049"/>
<dbReference type="HOGENOM" id="CLU_086389_0_0_1"/>
<dbReference type="InParanoid" id="Q5RDM3"/>
<dbReference type="OMA" id="PTYIIMF"/>
<dbReference type="OrthoDB" id="6507463at2759"/>
<dbReference type="TreeFam" id="TF314362"/>
<dbReference type="Proteomes" id="UP000001595">
    <property type="component" value="Chromosome 15"/>
</dbReference>
<dbReference type="GO" id="GO:0070765">
    <property type="term" value="C:gamma-secretase complex"/>
    <property type="evidence" value="ECO:0007669"/>
    <property type="project" value="Ensembl"/>
</dbReference>
<dbReference type="GO" id="GO:0030133">
    <property type="term" value="C:transport vesicle"/>
    <property type="evidence" value="ECO:0007669"/>
    <property type="project" value="Ensembl"/>
</dbReference>
<dbReference type="GO" id="GO:0061133">
    <property type="term" value="F:endopeptidase activator activity"/>
    <property type="evidence" value="ECO:0007669"/>
    <property type="project" value="Ensembl"/>
</dbReference>
<dbReference type="GO" id="GO:0030674">
    <property type="term" value="F:protein-macromolecule adaptor activity"/>
    <property type="evidence" value="ECO:0007669"/>
    <property type="project" value="Ensembl"/>
</dbReference>
<dbReference type="GO" id="GO:0034205">
    <property type="term" value="P:amyloid-beta formation"/>
    <property type="evidence" value="ECO:0007669"/>
    <property type="project" value="Ensembl"/>
</dbReference>
<dbReference type="GO" id="GO:0007220">
    <property type="term" value="P:Notch receptor processing"/>
    <property type="evidence" value="ECO:0007669"/>
    <property type="project" value="Ensembl"/>
</dbReference>
<dbReference type="GO" id="GO:0007219">
    <property type="term" value="P:Notch signaling pathway"/>
    <property type="evidence" value="ECO:0007669"/>
    <property type="project" value="UniProtKB-KW"/>
</dbReference>
<dbReference type="GO" id="GO:0016485">
    <property type="term" value="P:protein processing"/>
    <property type="evidence" value="ECO:0007669"/>
    <property type="project" value="Ensembl"/>
</dbReference>
<dbReference type="InterPro" id="IPR009294">
    <property type="entry name" value="Aph-1"/>
</dbReference>
<dbReference type="PANTHER" id="PTHR12889">
    <property type="entry name" value="GAMMA-SECRETASE SUBUNIT APH-1"/>
    <property type="match status" value="1"/>
</dbReference>
<dbReference type="Pfam" id="PF06105">
    <property type="entry name" value="Aph-1"/>
    <property type="match status" value="1"/>
</dbReference>
<sequence length="257" mass="28519">MTAAVFFGCAFIAFGPALALYVFTIATEPLRIIFLIAGAFFWLVSLLISSLVWFMARVIIDNKDGPTQKYLLIFGTFVSVYIQEMFRFAYYRLLKKASEGLKSINPGETAPSMRLLAYVSGLGFGIMSGVFSFVNTLSDSLGPGTVGIHGDSPQFFLYSAFMTLVIILLHVFWGIVFFDGCEKKKWGILLIVLLTHLLVSAQTFISSYYGINLASAFIILVLMGTWAFLAAGGSCRSLKLCLLCQDKDFLLYNQRSR</sequence>
<accession>Q5RDM3</accession>
<evidence type="ECO:0000250" key="1"/>
<evidence type="ECO:0000255" key="2"/>
<evidence type="ECO:0000305" key="3"/>
<comment type="function">
    <text evidence="1">Probable subunit of the gamma-secretase complex, an endoprotease complex that catalyzes the intramembrane cleavage of integral proteins such as Notch receptors and APP (amyloid-beta precursor protein). It probably represents a stabilizing cofactor for the presenilin homodimer that promotes the formation of a stable complex. Probably present in a minority of gamma-secretase complexes compared to APH1A (By similarity).</text>
</comment>
<comment type="subunit">
    <text evidence="1">Probable component of the gamma-secretase complex, a complex composed of a presenilin homodimer (PSEN1 or PSEN2), nicastrin (NCSTN), APH1 (APH1A or APH1B) and PEN2. Such minimal complex is sufficient for secretase activity, although other components may exist. Interacts with PSEN1 and PSEN2 (By similarity).</text>
</comment>
<comment type="subcellular location">
    <subcellularLocation>
        <location evidence="3">Membrane</location>
        <topology evidence="3">Multi-pass membrane protein</topology>
    </subcellularLocation>
</comment>
<comment type="similarity">
    <text evidence="3">Belongs to the APH-1 family.</text>
</comment>
<gene>
    <name type="primary">APH1B</name>
</gene>
<feature type="chain" id="PRO_0000221054" description="Gamma-secretase subunit APH-1B">
    <location>
        <begin position="1"/>
        <end position="257"/>
    </location>
</feature>
<feature type="transmembrane region" description="Helical; Name=1" evidence="2">
    <location>
        <begin position="5"/>
        <end position="25"/>
    </location>
</feature>
<feature type="transmembrane region" description="Helical; Name=2" evidence="2">
    <location>
        <begin position="32"/>
        <end position="52"/>
    </location>
</feature>
<feature type="transmembrane region" description="Helical; Name=3" evidence="2">
    <location>
        <begin position="70"/>
        <end position="90"/>
    </location>
</feature>
<feature type="transmembrane region" description="Helical; Name=4" evidence="2">
    <location>
        <begin position="115"/>
        <end position="135"/>
    </location>
</feature>
<feature type="transmembrane region" description="Helical; Name=5" evidence="2">
    <location>
        <begin position="158"/>
        <end position="178"/>
    </location>
</feature>
<feature type="transmembrane region" description="Helical; Name=6" evidence="2">
    <location>
        <begin position="186"/>
        <end position="206"/>
    </location>
</feature>
<feature type="transmembrane region" description="Helical; Name=7" evidence="2">
    <location>
        <begin position="213"/>
        <end position="233"/>
    </location>
</feature>
<proteinExistence type="evidence at transcript level"/>
<keyword id="KW-0472">Membrane</keyword>
<keyword id="KW-0914">Notch signaling pathway</keyword>
<keyword id="KW-1185">Reference proteome</keyword>
<keyword id="KW-0812">Transmembrane</keyword>
<keyword id="KW-1133">Transmembrane helix</keyword>
<organism>
    <name type="scientific">Pongo abelii</name>
    <name type="common">Sumatran orangutan</name>
    <name type="synonym">Pongo pygmaeus abelii</name>
    <dbReference type="NCBI Taxonomy" id="9601"/>
    <lineage>
        <taxon>Eukaryota</taxon>
        <taxon>Metazoa</taxon>
        <taxon>Chordata</taxon>
        <taxon>Craniata</taxon>
        <taxon>Vertebrata</taxon>
        <taxon>Euteleostomi</taxon>
        <taxon>Mammalia</taxon>
        <taxon>Eutheria</taxon>
        <taxon>Euarchontoglires</taxon>
        <taxon>Primates</taxon>
        <taxon>Haplorrhini</taxon>
        <taxon>Catarrhini</taxon>
        <taxon>Hominidae</taxon>
        <taxon>Pongo</taxon>
    </lineage>
</organism>
<name>APH1B_PONAB</name>